<accession>Q12M48</accession>
<feature type="chain" id="PRO_0000291163" description="UPF0434 protein Sden_2197">
    <location>
        <begin position="1"/>
        <end position="56"/>
    </location>
</feature>
<comment type="similarity">
    <text evidence="1">Belongs to the UPF0434 family.</text>
</comment>
<evidence type="ECO:0000255" key="1">
    <source>
        <dbReference type="HAMAP-Rule" id="MF_01187"/>
    </source>
</evidence>
<sequence>MAFDKKLLEIVACPVCKGKLEFDKQAQTLNCKFDKLAFPITEGIPVLLENRAQPLS</sequence>
<proteinExistence type="inferred from homology"/>
<keyword id="KW-1185">Reference proteome</keyword>
<gene>
    <name type="ordered locus">Sden_2197</name>
</gene>
<organism>
    <name type="scientific">Shewanella denitrificans (strain OS217 / ATCC BAA-1090 / DSM 15013)</name>
    <dbReference type="NCBI Taxonomy" id="318161"/>
    <lineage>
        <taxon>Bacteria</taxon>
        <taxon>Pseudomonadati</taxon>
        <taxon>Pseudomonadota</taxon>
        <taxon>Gammaproteobacteria</taxon>
        <taxon>Alteromonadales</taxon>
        <taxon>Shewanellaceae</taxon>
        <taxon>Shewanella</taxon>
    </lineage>
</organism>
<dbReference type="EMBL" id="CP000302">
    <property type="protein sequence ID" value="ABE55478.1"/>
    <property type="molecule type" value="Genomic_DNA"/>
</dbReference>
<dbReference type="RefSeq" id="WP_011496631.1">
    <property type="nucleotide sequence ID" value="NC_007954.1"/>
</dbReference>
<dbReference type="SMR" id="Q12M48"/>
<dbReference type="STRING" id="318161.Sden_2197"/>
<dbReference type="KEGG" id="sdn:Sden_2197"/>
<dbReference type="eggNOG" id="COG2835">
    <property type="taxonomic scope" value="Bacteria"/>
</dbReference>
<dbReference type="HOGENOM" id="CLU_155659_3_1_6"/>
<dbReference type="OrthoDB" id="9812205at2"/>
<dbReference type="Proteomes" id="UP000001982">
    <property type="component" value="Chromosome"/>
</dbReference>
<dbReference type="GO" id="GO:0005829">
    <property type="term" value="C:cytosol"/>
    <property type="evidence" value="ECO:0007669"/>
    <property type="project" value="TreeGrafter"/>
</dbReference>
<dbReference type="FunFam" id="2.20.25.10:FF:000002">
    <property type="entry name" value="UPF0434 protein YcaR"/>
    <property type="match status" value="1"/>
</dbReference>
<dbReference type="Gene3D" id="2.20.25.10">
    <property type="match status" value="1"/>
</dbReference>
<dbReference type="HAMAP" id="MF_01187">
    <property type="entry name" value="UPF0434"/>
    <property type="match status" value="1"/>
</dbReference>
<dbReference type="InterPro" id="IPR005651">
    <property type="entry name" value="Trm112-like"/>
</dbReference>
<dbReference type="PANTHER" id="PTHR33505:SF4">
    <property type="entry name" value="PROTEIN PREY, MITOCHONDRIAL"/>
    <property type="match status" value="1"/>
</dbReference>
<dbReference type="PANTHER" id="PTHR33505">
    <property type="entry name" value="ZGC:162634"/>
    <property type="match status" value="1"/>
</dbReference>
<dbReference type="Pfam" id="PF03966">
    <property type="entry name" value="Trm112p"/>
    <property type="match status" value="1"/>
</dbReference>
<dbReference type="SUPFAM" id="SSF158997">
    <property type="entry name" value="Trm112p-like"/>
    <property type="match status" value="1"/>
</dbReference>
<name>Y2197_SHEDO</name>
<reference key="1">
    <citation type="submission" date="2006-03" db="EMBL/GenBank/DDBJ databases">
        <title>Complete sequence of Shewanella denitrificans OS217.</title>
        <authorList>
            <consortium name="US DOE Joint Genome Institute"/>
            <person name="Copeland A."/>
            <person name="Lucas S."/>
            <person name="Lapidus A."/>
            <person name="Barry K."/>
            <person name="Detter J.C."/>
            <person name="Glavina del Rio T."/>
            <person name="Hammon N."/>
            <person name="Israni S."/>
            <person name="Dalin E."/>
            <person name="Tice H."/>
            <person name="Pitluck S."/>
            <person name="Brettin T."/>
            <person name="Bruce D."/>
            <person name="Han C."/>
            <person name="Tapia R."/>
            <person name="Gilna P."/>
            <person name="Kiss H."/>
            <person name="Schmutz J."/>
            <person name="Larimer F."/>
            <person name="Land M."/>
            <person name="Hauser L."/>
            <person name="Kyrpides N."/>
            <person name="Lykidis A."/>
            <person name="Richardson P."/>
        </authorList>
    </citation>
    <scope>NUCLEOTIDE SEQUENCE [LARGE SCALE GENOMIC DNA]</scope>
    <source>
        <strain>OS217 / ATCC BAA-1090 / DSM 15013</strain>
    </source>
</reference>
<protein>
    <recommendedName>
        <fullName evidence="1">UPF0434 protein Sden_2197</fullName>
    </recommendedName>
</protein>